<dbReference type="EC" id="3.4.23.39" evidence="6 10 14 15 17 19 20"/>
<dbReference type="EMBL" id="L10740">
    <property type="protein sequence ID" value="AAA68217.1"/>
    <property type="molecule type" value="Genomic_DNA"/>
</dbReference>
<dbReference type="EMBL" id="CH671923">
    <property type="protein sequence ID" value="KOB58717.1"/>
    <property type="molecule type" value="Genomic_DNA"/>
</dbReference>
<dbReference type="PDB" id="1LEE">
    <property type="method" value="X-ray"/>
    <property type="resolution" value="1.90 A"/>
    <property type="chains" value="A=123-453"/>
</dbReference>
<dbReference type="PDB" id="1LF2">
    <property type="method" value="X-ray"/>
    <property type="resolution" value="1.80 A"/>
    <property type="chains" value="A=123-453"/>
</dbReference>
<dbReference type="PDB" id="1LF3">
    <property type="method" value="X-ray"/>
    <property type="resolution" value="2.70 A"/>
    <property type="chains" value="A=123-453"/>
</dbReference>
<dbReference type="PDB" id="1LF4">
    <property type="method" value="X-ray"/>
    <property type="resolution" value="1.90 A"/>
    <property type="chains" value="A=123-453"/>
</dbReference>
<dbReference type="PDB" id="1M43">
    <property type="method" value="X-ray"/>
    <property type="resolution" value="2.40 A"/>
    <property type="chains" value="A/B=123-453"/>
</dbReference>
<dbReference type="PDB" id="1ME6">
    <property type="method" value="X-ray"/>
    <property type="resolution" value="2.70 A"/>
    <property type="chains" value="A/B=125-453"/>
</dbReference>
<dbReference type="PDB" id="1PFZ">
    <property type="method" value="X-ray"/>
    <property type="resolution" value="1.85 A"/>
    <property type="chains" value="A/B/C/D=77-453"/>
</dbReference>
<dbReference type="PDB" id="1SME">
    <property type="method" value="X-ray"/>
    <property type="resolution" value="2.70 A"/>
    <property type="chains" value="A/B=125-453"/>
</dbReference>
<dbReference type="PDB" id="1W6H">
    <property type="method" value="X-ray"/>
    <property type="resolution" value="2.24 A"/>
    <property type="chains" value="A/B=123-453"/>
</dbReference>
<dbReference type="PDB" id="1W6I">
    <property type="method" value="X-ray"/>
    <property type="resolution" value="2.70 A"/>
    <property type="chains" value="A/C=123-453"/>
</dbReference>
<dbReference type="PDB" id="1XDH">
    <property type="method" value="X-ray"/>
    <property type="resolution" value="1.70 A"/>
    <property type="chains" value="A/B=123-453"/>
</dbReference>
<dbReference type="PDB" id="1XE5">
    <property type="method" value="X-ray"/>
    <property type="resolution" value="2.40 A"/>
    <property type="chains" value="A/B=125-453"/>
</dbReference>
<dbReference type="PDB" id="1XE6">
    <property type="method" value="X-ray"/>
    <property type="resolution" value="2.80 A"/>
    <property type="chains" value="A/B=125-453"/>
</dbReference>
<dbReference type="PDB" id="2BJU">
    <property type="method" value="X-ray"/>
    <property type="resolution" value="1.56 A"/>
    <property type="chains" value="A=1-453"/>
</dbReference>
<dbReference type="PDB" id="2IGX">
    <property type="method" value="X-ray"/>
    <property type="resolution" value="1.70 A"/>
    <property type="chains" value="A=125-453"/>
</dbReference>
<dbReference type="PDB" id="2IGY">
    <property type="method" value="X-ray"/>
    <property type="resolution" value="2.60 A"/>
    <property type="chains" value="A/B=125-453"/>
</dbReference>
<dbReference type="PDB" id="2R9B">
    <property type="method" value="X-ray"/>
    <property type="resolution" value="2.80 A"/>
    <property type="chains" value="A/B=125-453"/>
</dbReference>
<dbReference type="PDB" id="3F9Q">
    <property type="method" value="X-ray"/>
    <property type="resolution" value="1.90 A"/>
    <property type="chains" value="A=125-453"/>
</dbReference>
<dbReference type="PDB" id="4CKU">
    <property type="method" value="X-ray"/>
    <property type="resolution" value="1.85 A"/>
    <property type="chains" value="A/B/C/D/E/F=125-453"/>
</dbReference>
<dbReference type="PDB" id="4Y6M">
    <property type="method" value="X-ray"/>
    <property type="resolution" value="2.27 A"/>
    <property type="chains" value="A/B/C=125-453"/>
</dbReference>
<dbReference type="PDB" id="4YA8">
    <property type="method" value="X-ray"/>
    <property type="resolution" value="3.30 A"/>
    <property type="chains" value="A/B/C/D=125-453"/>
</dbReference>
<dbReference type="PDB" id="4Z22">
    <property type="method" value="X-ray"/>
    <property type="resolution" value="2.62 A"/>
    <property type="chains" value="A/B=125-453"/>
</dbReference>
<dbReference type="PDB" id="5BWY">
    <property type="method" value="X-ray"/>
    <property type="resolution" value="2.64 A"/>
    <property type="chains" value="A=78-453"/>
</dbReference>
<dbReference type="PDBsum" id="1LEE"/>
<dbReference type="PDBsum" id="1LF2"/>
<dbReference type="PDBsum" id="1LF3"/>
<dbReference type="PDBsum" id="1LF4"/>
<dbReference type="PDBsum" id="1M43"/>
<dbReference type="PDBsum" id="1ME6"/>
<dbReference type="PDBsum" id="1PFZ"/>
<dbReference type="PDBsum" id="1SME"/>
<dbReference type="PDBsum" id="1W6H"/>
<dbReference type="PDBsum" id="1W6I"/>
<dbReference type="PDBsum" id="1XDH"/>
<dbReference type="PDBsum" id="1XE5"/>
<dbReference type="PDBsum" id="1XE6"/>
<dbReference type="PDBsum" id="2BJU"/>
<dbReference type="PDBsum" id="2IGX"/>
<dbReference type="PDBsum" id="2IGY"/>
<dbReference type="PDBsum" id="2R9B"/>
<dbReference type="PDBsum" id="3F9Q"/>
<dbReference type="PDBsum" id="4CKU"/>
<dbReference type="PDBsum" id="4Y6M"/>
<dbReference type="PDBsum" id="4YA8"/>
<dbReference type="PDBsum" id="4Z22"/>
<dbReference type="PDBsum" id="5BWY"/>
<dbReference type="SMR" id="P46925"/>
<dbReference type="BindingDB" id="P46925"/>
<dbReference type="ChEMBL" id="CHEMBL4414"/>
<dbReference type="DrugBank" id="DB04378">
    <property type="generic name" value="3-Amino-N-{4-[2-(2,6-Dimethyl-Phenoxy)-Acetylamino]-3-Hydroxy-1-Isobutyl-5-Phenyl-Pentyl}-Benzamide"/>
</dbReference>
<dbReference type="DrugBank" id="DB04373">
    <property type="generic name" value="4-Amino-N-{4-[2-(2,6-Dimethyl-Phenoxy)-Acetylamino]-3-Hydroxy-1-Isobutyl-5-Phenyl-Pentyl}-Benzamide"/>
</dbReference>
<dbReference type="DrugBank" id="DB11638">
    <property type="generic name" value="Artenimol"/>
</dbReference>
<dbReference type="DrugBank" id="DB01218">
    <property type="generic name" value="Halofantrine"/>
</dbReference>
<dbReference type="DrugBank" id="DB16961">
    <property type="generic name" value="Leupeptin"/>
</dbReference>
<dbReference type="DrugBank" id="DB02505">
    <property type="generic name" value="N-(R-Carboxy-Ethyl)-Alpha-(S)-(2-Phenylethyl)"/>
</dbReference>
<dbReference type="DrugBank" id="DB03063">
    <property type="generic name" value="N-[(2S,3S)-4-[2-[(5S)-3a,4,5,6,7,7a-Hexahydro-1,3-benzodioxol-5-yl]ethyl-[3-(1,3-dioxoisoindol-2-yl)propanoyl]amino]-3-hydroxy-1-phenylbutan-2-yl]-3,5-dimethoxy-4-phenylmethoxybenzamide"/>
</dbReference>
<dbReference type="MEROPS" id="A01.023"/>
<dbReference type="EnsemblProtists" id="KOB58717">
    <property type="protein sequence ID" value="KOB58717"/>
    <property type="gene ID" value="PFHG_00465"/>
</dbReference>
<dbReference type="KEGG" id="pfh:PFHG_00465"/>
<dbReference type="VEuPathDB" id="PlasmoDB:PF3D7_1408000"/>
<dbReference type="VEuPathDB" id="PlasmoDB:Pf7G8-2_000483200"/>
<dbReference type="VEuPathDB" id="PlasmoDB:Pf7G8_140013400"/>
<dbReference type="VEuPathDB" id="PlasmoDB:PfCD01_140013700"/>
<dbReference type="VEuPathDB" id="PlasmoDB:PfDd2_140012600"/>
<dbReference type="VEuPathDB" id="PlasmoDB:PfGA01_140013700"/>
<dbReference type="VEuPathDB" id="PlasmoDB:PfGB4_140014200"/>
<dbReference type="VEuPathDB" id="PlasmoDB:PfGN01_140013300"/>
<dbReference type="VEuPathDB" id="PlasmoDB:PfHB3_140013900"/>
<dbReference type="VEuPathDB" id="PlasmoDB:PfIT_140014600"/>
<dbReference type="VEuPathDB" id="PlasmoDB:PfKE01_140013300"/>
<dbReference type="VEuPathDB" id="PlasmoDB:PfKH01_140013600"/>
<dbReference type="VEuPathDB" id="PlasmoDB:PfKH02_140013900"/>
<dbReference type="VEuPathDB" id="PlasmoDB:PfML01_140013500"/>
<dbReference type="VEuPathDB" id="PlasmoDB:PfNF135_140013500"/>
<dbReference type="VEuPathDB" id="PlasmoDB:PfNF166_140012200"/>
<dbReference type="VEuPathDB" id="PlasmoDB:PfNF54_140013000"/>
<dbReference type="VEuPathDB" id="PlasmoDB:PfSD01_140011500"/>
<dbReference type="VEuPathDB" id="PlasmoDB:PfSN01_140015400"/>
<dbReference type="VEuPathDB" id="PlasmoDB:PfTG01_140013400"/>
<dbReference type="OMA" id="KYDHDAS"/>
<dbReference type="OrthoDB" id="192at418107"/>
<dbReference type="BioCyc" id="MetaCyc:MONOMER-15374"/>
<dbReference type="BRENDA" id="3.4.23.39">
    <property type="organism ID" value="4889"/>
</dbReference>
<dbReference type="EvolutionaryTrace" id="P46925"/>
<dbReference type="Proteomes" id="UP000054289">
    <property type="component" value="Unassembled WGS sequence"/>
</dbReference>
<dbReference type="GO" id="GO:0031910">
    <property type="term" value="C:cytostome"/>
    <property type="evidence" value="ECO:0000314"/>
    <property type="project" value="UniProtKB"/>
</dbReference>
<dbReference type="GO" id="GO:0020020">
    <property type="term" value="C:food vacuole"/>
    <property type="evidence" value="ECO:0000314"/>
    <property type="project" value="UniProtKB"/>
</dbReference>
<dbReference type="GO" id="GO:0005775">
    <property type="term" value="C:vacuolar lumen"/>
    <property type="evidence" value="ECO:0007669"/>
    <property type="project" value="UniProtKB-SubCell"/>
</dbReference>
<dbReference type="GO" id="GO:0005774">
    <property type="term" value="C:vacuolar membrane"/>
    <property type="evidence" value="ECO:0007669"/>
    <property type="project" value="UniProtKB-SubCell"/>
</dbReference>
<dbReference type="GO" id="GO:0004190">
    <property type="term" value="F:aspartic-type endopeptidase activity"/>
    <property type="evidence" value="ECO:0000314"/>
    <property type="project" value="UniProtKB"/>
</dbReference>
<dbReference type="GO" id="GO:0044002">
    <property type="term" value="P:acquisition of nutrients from host"/>
    <property type="evidence" value="ECO:0000314"/>
    <property type="project" value="UniProtKB"/>
</dbReference>
<dbReference type="GO" id="GO:0006508">
    <property type="term" value="P:proteolysis"/>
    <property type="evidence" value="ECO:0007669"/>
    <property type="project" value="UniProtKB-KW"/>
</dbReference>
<dbReference type="CDD" id="cd05471">
    <property type="entry name" value="pepsin_like"/>
    <property type="match status" value="1"/>
</dbReference>
<dbReference type="FunFam" id="2.40.70.10:FF:000035">
    <property type="entry name" value="Plasmepsin-2"/>
    <property type="match status" value="1"/>
</dbReference>
<dbReference type="FunFam" id="2.40.70.10:FF:000038">
    <property type="entry name" value="Plasmepsin-2"/>
    <property type="match status" value="1"/>
</dbReference>
<dbReference type="Gene3D" id="2.40.70.10">
    <property type="entry name" value="Acid Proteases"/>
    <property type="match status" value="2"/>
</dbReference>
<dbReference type="InterPro" id="IPR001461">
    <property type="entry name" value="Aspartic_peptidase_A1"/>
</dbReference>
<dbReference type="InterPro" id="IPR001969">
    <property type="entry name" value="Aspartic_peptidase_AS"/>
</dbReference>
<dbReference type="InterPro" id="IPR034164">
    <property type="entry name" value="Pepsin-like_dom"/>
</dbReference>
<dbReference type="InterPro" id="IPR033121">
    <property type="entry name" value="PEPTIDASE_A1"/>
</dbReference>
<dbReference type="InterPro" id="IPR021109">
    <property type="entry name" value="Peptidase_aspartic_dom_sf"/>
</dbReference>
<dbReference type="PANTHER" id="PTHR47966">
    <property type="entry name" value="BETA-SITE APP-CLEAVING ENZYME, ISOFORM A-RELATED"/>
    <property type="match status" value="1"/>
</dbReference>
<dbReference type="PANTHER" id="PTHR47966:SF51">
    <property type="entry name" value="BETA-SITE APP-CLEAVING ENZYME, ISOFORM A-RELATED"/>
    <property type="match status" value="1"/>
</dbReference>
<dbReference type="Pfam" id="PF00026">
    <property type="entry name" value="Asp"/>
    <property type="match status" value="1"/>
</dbReference>
<dbReference type="PRINTS" id="PR00792">
    <property type="entry name" value="PEPSIN"/>
</dbReference>
<dbReference type="SUPFAM" id="SSF50630">
    <property type="entry name" value="Acid proteases"/>
    <property type="match status" value="1"/>
</dbReference>
<dbReference type="PROSITE" id="PS00141">
    <property type="entry name" value="ASP_PROTEASE"/>
    <property type="match status" value="2"/>
</dbReference>
<dbReference type="PROSITE" id="PS51767">
    <property type="entry name" value="PEPTIDASE_A1"/>
    <property type="match status" value="1"/>
</dbReference>
<proteinExistence type="evidence at protein level"/>
<gene>
    <name evidence="31" type="primary">PMII</name>
</gene>
<sequence>MDITVREHDFKHGFIKSNSTFDGLNIDNSKNKKKIQKGFQILYVLLFCSVMCGLFYYVYENVWLQRDNEMNEILKNSEHLTIGFKVENAHDRILKTIKTHKLKNYIKESVNFLNSGLTKTNYLGSSNDNIELVDFQNIMFYGDAEVGDNQQPFTFILDTGSANLWVPSVKCTTAGCLTKHLYDSSKSRTYEKDGTKVEMNYVSGTVSGFFSKDLVTVGNLSLPYKFIEVIDTNGFEPTYTASTFDGILGLGWKDLSIGSVDPIVVELKNQNKIENALFTFYLPVHDKHTGFLTIGGIEERFYEGPLTYEKLNHDLYWQITLDAHVGNIMLEKANCIVDSGTSAITVPTDFLNKMLQNLDVIKVPFLPFYVTLCNNSKLPTFEFTSENGKYTLEPEYYLQHIEDVGPGLCMLNIIGLDFPVPTFILGDPFMRKYFTVFDYDNHSVGIALAKKNL</sequence>
<keyword id="KW-0002">3D-structure</keyword>
<keyword id="KW-0064">Aspartyl protease</keyword>
<keyword id="KW-0903">Direct protein sequencing</keyword>
<keyword id="KW-1015">Disulfide bond</keyword>
<keyword id="KW-0378">Hydrolase</keyword>
<keyword id="KW-0472">Membrane</keyword>
<keyword id="KW-0645">Protease</keyword>
<keyword id="KW-1185">Reference proteome</keyword>
<keyword id="KW-0735">Signal-anchor</keyword>
<keyword id="KW-0812">Transmembrane</keyword>
<keyword id="KW-1133">Transmembrane helix</keyword>
<keyword id="KW-0926">Vacuole</keyword>
<keyword id="KW-0865">Zymogen</keyword>
<reference key="1">
    <citation type="journal article" date="1994" name="Mol. Biochem. Parasitol.">
        <title>Sequence, expression and modeled structure of an aspartic proteinase from the human malaria parasite Plasmodium falciparum.</title>
        <authorList>
            <person name="Dame J.B."/>
            <person name="Reddy G.R."/>
            <person name="Yowell C.A."/>
            <person name="Dunn B.M."/>
            <person name="Kay J."/>
            <person name="Berry C."/>
        </authorList>
    </citation>
    <scope>NUCLEOTIDE SEQUENCE [GENOMIC DNA]</scope>
    <scope>PARTIAL PROTEIN SEQUENCE</scope>
    <scope>3D-STRUCTURE MODELING</scope>
    <source>
        <strain>HB3</strain>
    </source>
</reference>
<reference evidence="33" key="2">
    <citation type="submission" date="2006-03" db="EMBL/GenBank/DDBJ databases">
        <title>Annotation of Plasmodium falciparum HB3.</title>
        <authorList>
            <consortium name="The Broad Institute Genome Sequencing Platform"/>
            <person name="Volkman S.K."/>
            <person name="Neafsey D.E."/>
            <person name="Dash A.P."/>
            <person name="Chitnis C.E."/>
            <person name="Hartl D.L."/>
            <person name="Young S.K."/>
            <person name="Zeng Q."/>
            <person name="Koehrsen M."/>
            <person name="Alvarado L."/>
            <person name="Berlin A."/>
            <person name="Borenstein D."/>
            <person name="Chapman S.B."/>
            <person name="Chen Z."/>
            <person name="Engels R."/>
            <person name="Freedman E."/>
            <person name="Gellesch M."/>
            <person name="Goldberg J."/>
            <person name="Griggs A."/>
            <person name="Gujja S."/>
            <person name="Heilman E.R."/>
            <person name="Heiman D.I."/>
            <person name="Howarth C."/>
            <person name="Jen D."/>
            <person name="Larson L."/>
            <person name="Mehta T."/>
            <person name="Neiman D."/>
            <person name="Park D."/>
            <person name="Pearson M."/>
            <person name="Roberts A."/>
            <person name="Saif S."/>
            <person name="Shea T."/>
            <person name="Shenoy N."/>
            <person name="Sisk P."/>
            <person name="Stolte C."/>
            <person name="Sykes S."/>
            <person name="Walk T."/>
            <person name="White J."/>
            <person name="Yandava C."/>
            <person name="Haas B."/>
            <person name="Henn M.R."/>
            <person name="Nusbaum C."/>
            <person name="Birren B."/>
        </authorList>
    </citation>
    <scope>NUCLEOTIDE SEQUENCE [LARGE SCALE GENOMIC DNA]</scope>
    <source>
        <strain evidence="33">HB3</strain>
    </source>
</reference>
<reference key="3">
    <citation type="journal article" date="1996" name="Mol. Biochem. Parasitol.">
        <title>Kinetic analysis of plasmepsins I and II aspartic proteases of the Plasmodium falciparum digestive vacuole.</title>
        <authorList>
            <person name="Luker K.E."/>
            <person name="Francis S.E."/>
            <person name="Gluzman I.Y."/>
            <person name="Goldberg D.E."/>
        </authorList>
    </citation>
    <scope>FUNCTION</scope>
    <scope>CATALYTIC ACTIVITY</scope>
    <scope>ACTIVITY REGULATION</scope>
</reference>
<reference key="4">
    <citation type="journal article" date="1997" name="J. Biol. Chem.">
        <title>Biosynthesis and maturation of the malaria aspartic hemoglobinases plasmepsins I and II.</title>
        <authorList>
            <person name="Francis S.E."/>
            <person name="Banerjee R."/>
            <person name="Goldberg D.E."/>
        </authorList>
    </citation>
    <scope>SUBCELLULAR LOCATION</scope>
    <scope>DEVELOPMENTAL STAGE</scope>
    <scope>PROTEOLYTIC CLEAVAGE</scope>
    <scope>LACK OF GLYCOSYLATION</scope>
</reference>
<reference key="5">
    <citation type="journal article" date="2002" name="Proc. Natl. Acad. Sci. U.S.A.">
        <title>Four plasmepsins are active in the Plasmodium falciparum food vacuole, including a protease with an active-site histidine.</title>
        <authorList>
            <person name="Banerjee R."/>
            <person name="Liu J."/>
            <person name="Beatty W."/>
            <person name="Pelosof L."/>
            <person name="Klemba M."/>
            <person name="Goldberg D.E."/>
        </authorList>
    </citation>
    <scope>FUNCTION</scope>
    <scope>CATALYTIC ACTIVITY</scope>
    <scope>SUBCELLULAR LOCATION</scope>
    <scope>DEVELOPMENTAL STAGE</scope>
</reference>
<reference key="6">
    <citation type="journal article" date="2003" name="Mol. Biochem. Parasitol.">
        <title>Food vacuole plasmepsins are processed at a conserved site by an acidic convertase activity in Plasmodium falciparum.</title>
        <authorList>
            <person name="Banerjee R."/>
            <person name="Francis S.E."/>
            <person name="Goldberg D.E."/>
        </authorList>
    </citation>
    <scope>DEVELOPMENTAL STAGE</scope>
    <scope>PROTEOLYTIC CLEAVAGE</scope>
</reference>
<reference key="7">
    <citation type="journal article" date="2005" name="J. Biol. Chem.">
        <title>Distal substrate interactions enhance plasmepsin activity.</title>
        <authorList>
            <person name="Istvan E.S."/>
            <person name="Goldberg D.E."/>
        </authorList>
    </citation>
    <scope>FUNCTION</scope>
    <scope>CATALYTIC ACTIVITY</scope>
    <scope>MUTAGENESIS OF ALA-241 AND PHE-244</scope>
</reference>
<reference evidence="41" key="8">
    <citation type="journal article" date="1996" name="Proc. Natl. Acad. Sci. U.S.A.">
        <title>Structure and inhibition of plasmepsin II, a hemoglobin-degrading enzyme from Plasmodium falciparum.</title>
        <authorList>
            <person name="Silva A.M."/>
            <person name="Lee A.Y."/>
            <person name="Gulnik S.V."/>
            <person name="Maier P."/>
            <person name="Collins J."/>
            <person name="Bhat T.N."/>
            <person name="Collins P.J."/>
            <person name="Cachau R.E."/>
            <person name="Luker K.E."/>
            <person name="Gluzman I.Y."/>
            <person name="Francis S.E."/>
            <person name="Oksman A."/>
            <person name="Goldberg D.E."/>
            <person name="Erickson J.W."/>
        </authorList>
    </citation>
    <scope>X-RAY CRYSTALLOGRAPHY (2.7 ANGSTROMS) OF 125-453</scope>
    <scope>CATALYTIC ACTIVITY</scope>
    <scope>DISULFIDE BONDS</scope>
</reference>
<reference evidence="40" key="9">
    <citation type="journal article" date="1999" name="Nat. Struct. Biol.">
        <title>Crystal structure of the novel aspartic proteinase zymogen proplasmepsin II from Plasmodium falciparum.</title>
        <authorList>
            <person name="Bernstein N.K."/>
            <person name="Cherney M.M."/>
            <person name="Loetscher H."/>
            <person name="Ridley R.G."/>
            <person name="James M.N."/>
        </authorList>
    </citation>
    <scope>X-RAY CRYSTALLOGRAPHY (1.85 ANGSTROMS) OF 75-453</scope>
    <scope>DISULFIDE BONDS</scope>
</reference>
<reference evidence="34 35" key="10">
    <citation type="journal article" date="2002" name="Acta Crystallogr. D">
        <title>Structures of Ser205 mutant plasmepsin II from Plasmodium falciparum at 1.8 A in complex with the inhibitors rs367 and rs370.</title>
        <authorList>
            <person name="Asojo O.A."/>
            <person name="Afonina E."/>
            <person name="Gulnik S.V."/>
            <person name="Yu B."/>
            <person name="Erickson J.W."/>
            <person name="Randad R."/>
            <person name="Medjahed D."/>
            <person name="Silva A.M."/>
        </authorList>
    </citation>
    <scope>X-RAY CRYSTALLOGRAPHY (1.80 ANGSTROMS) OF 123-453 OF MUTANT SER-330 IN COMPLEX WITH INHIBITOR</scope>
    <scope>DISULFIDE BONDS</scope>
</reference>
<reference evidence="38" key="11">
    <citation type="submission" date="2002-07" db="PDB data bank">
        <title>Novel uncomplexed and complex structures of PM II, an aspartic protease from P. falciparum.</title>
        <authorList>
            <person name="Asojo O.A."/>
            <person name="Silva A.M."/>
            <person name="Gulnik S."/>
        </authorList>
    </citation>
    <scope>X-RAY CRYSTALLOGRAPHY (2.40 ANGSTROMS) OF 123-453 IN COMPLEX WITH INHIBITOR</scope>
    <scope>DISULFIDE BONDS</scope>
</reference>
<reference evidence="39" key="12">
    <citation type="submission" date="2002-08" db="PDB data bank">
        <title>CRYSTAL STRUCTURE OF PLASMEPSIN II, AN ASPARTYL PROTEASE FROM PLASMODIUM FALCIPARUM, IN COMPLEX WITH A STATINE-BASED INHIBITOR.</title>
        <authorList>
            <person name="Freire E."/>
            <person name="Nezami A.G."/>
            <person name="Amzel L.M."/>
        </authorList>
    </citation>
    <scope>X-RAY CRYSTALLOGRAPHY (2.70 ANGSTROMS) OF 125-453 IN COMPLEX WITH INHIBITOR</scope>
    <scope>DISULFIDE BONDS</scope>
</reference>
<reference evidence="36 37" key="13">
    <citation type="journal article" date="2003" name="J. Mol. Biol.">
        <title>Novel uncomplexed and complexed structures of plasmepsin II, an aspartic protease from Plasmodium falciparum.</title>
        <authorList>
            <person name="Asojo O.A."/>
            <person name="Gulnik S.V."/>
            <person name="Afonina E."/>
            <person name="Yu B."/>
            <person name="Ellman J.A."/>
            <person name="Haque T.S."/>
            <person name="Silva A.M."/>
        </authorList>
    </citation>
    <scope>X-RAY CRYSTALLOGRAPHY (1.90 ANGSTROMS) OF 123-453 IN COMPLEX WITH INHIBITOR</scope>
    <scope>DISULFIDE BONDS</scope>
</reference>
<reference evidence="42 43" key="14">
    <citation type="submission" date="2004-08" db="PDB data bank">
        <title>Structural Study of a Novel Inhibitor with Bulky P1 Side Chain in Complex with Plasmepsin II -Implications for Drug Design.</title>
        <authorList>
            <person name="Lindberg J."/>
            <person name="Johansson P.-O."/>
            <person name="Rosenquist A."/>
            <person name="Kvarnstroem I."/>
            <person name="Vrang L."/>
            <person name="Samuelsson B."/>
            <person name="Unge T."/>
        </authorList>
    </citation>
    <scope>X-RAY CRYSTALLOGRAPHY (2.24 ANGSTROMS) OF 123-453 IN COMPLEX WITH INHIBITOR</scope>
    <scope>DISULFIDE BONDS</scope>
</reference>
<reference evidence="44" key="15">
    <citation type="submission" date="2004-09" db="PDB data bank">
        <title>Structure of plasmepsin II in complex with pepstatin A.</title>
        <authorList>
            <person name="Prade L."/>
        </authorList>
    </citation>
    <scope>X-RAY CRYSTALLOGRAPHY (1.70 ANGSTROMS) OF 123-453 IN COMPLEX WITH INHIBITOR</scope>
    <scope>DISULFIDE BONDS</scope>
</reference>
<reference evidence="45 46" key="16">
    <citation type="submission" date="2004-09" db="PDB data bank">
        <title>Structure of plasmepsin II in complex of an pepstatin analogue.</title>
        <authorList>
            <person name="Prade L."/>
        </authorList>
    </citation>
    <scope>X-RAY CRYSTALLOGRAPHY (2.40 ANGSTROMS) OF 125-453 IN COMPLEX WITH INHIBITOR</scope>
    <scope>DISULFIDE BONDS</scope>
</reference>
<reference evidence="47" key="17">
    <citation type="journal article" date="2005" name="J. Biol. Chem.">
        <title>X-ray structure of plasmepsin II complexed with a potent achiral inhibitor.</title>
        <authorList>
            <person name="Prade L."/>
            <person name="Jones A.F."/>
            <person name="Boss C."/>
            <person name="Richard-Bildstein S."/>
            <person name="Meyer S."/>
            <person name="Binkert C."/>
            <person name="Bur D."/>
        </authorList>
    </citation>
    <scope>X-RAY CRYSTALLOGRAPHY (1.56 ANGSTROMS) IN COMPLEX WITH INHIBITOR</scope>
    <scope>DISULFIDE BONDS</scope>
</reference>
<reference evidence="48 49" key="18">
    <citation type="journal article" date="2006" name="ChemMedChem">
        <title>Achiral, cheap, and potent inhibitors of Plasmepsins I, II, and IV.</title>
        <authorList>
            <person name="Boss C."/>
            <person name="Corminboeuf O."/>
            <person name="Grisostomi C."/>
            <person name="Meyer S."/>
            <person name="Jones A.F."/>
            <person name="Prade L."/>
            <person name="Binkert C."/>
            <person name="Fischli W."/>
            <person name="Weller T."/>
            <person name="Bur D."/>
        </authorList>
    </citation>
    <scope>X-RAY CRYSTALLOGRAPHY (1.70 ANGSTROMS) OF 125-453 IN COMPLEX WITH INHIBITOR</scope>
    <scope>DISULFIDE BONDS</scope>
</reference>
<reference evidence="51" key="19">
    <citation type="journal article" date="2009" name="Acta Crystallogr. D">
        <title>Crystallographic evidence for noncoplanar catalytic aspartic acids in plasmepsin II resides in the Protein Data Bank.</title>
        <authorList>
            <person name="Robbins A.H."/>
            <person name="Dunn B.M."/>
            <person name="Agbandje-McKenna M."/>
            <person name="McKenna R."/>
        </authorList>
    </citation>
    <scope>X-RAY CRYSTALLOGRAPHY (1.90 ANGSTROMS) OF 125-453</scope>
    <scope>DISULFIDE BONDS</scope>
</reference>
<reference evidence="50" key="20">
    <citation type="journal article" date="2009" name="Biochemistry">
        <title>Recombinant plasmepsin 1 from the human malaria parasite plasmodium falciparum: enzymatic characterization, active site inhibitor design, and structural analysis.</title>
        <authorList>
            <person name="Liu P."/>
            <person name="Marzahn M.R."/>
            <person name="Robbins A.H."/>
            <person name="Gutierrez-de-Teran H."/>
            <person name="Rodriguez D."/>
            <person name="McClung S.H."/>
            <person name="Stevens S.M. Jr."/>
            <person name="Yowell C.A."/>
            <person name="Dame J.B."/>
            <person name="McKenna R."/>
            <person name="Dunn B.M."/>
        </authorList>
    </citation>
    <scope>X-RAY CRYSTALLOGRAPHY (2.80 ANGSTROMS) OF 125-453 IN COMPLEX WITH INHIBITOR</scope>
    <scope>CATALYTIC ACTIVITY</scope>
    <scope>DISULFIDE BONDS</scope>
</reference>
<reference evidence="52" key="21">
    <citation type="journal article" date="2014" name="ACS Med. Chem. Lett.">
        <title>Plasmepsin inhibitory activity and structure-guided optimization of a potent hydroxyethylamine-based antimalarial hit.</title>
        <authorList>
            <person name="Jaudzems K."/>
            <person name="Tars K."/>
            <person name="Maurops G."/>
            <person name="Ivdra N."/>
            <person name="Otikovs M."/>
            <person name="Leitans J."/>
            <person name="Kanepe-Lapsa I."/>
            <person name="Domraceva I."/>
            <person name="Mutule I."/>
            <person name="Trapencieris P."/>
            <person name="Blackman M.J."/>
            <person name="Jirgensons A."/>
        </authorList>
    </citation>
    <scope>X-RAY CRYSTALLOGRAPHY (1.85 ANGSTROMS) OF 125-453 IN COMPLEX WITH INHIBITOR</scope>
    <scope>CATALYTIC ACTIVITY</scope>
    <scope>DISULFIDE BONDS</scope>
</reference>
<reference evidence="53 54" key="22">
    <citation type="journal article" date="2015" name="Acta Crystallogr. F">
        <title>Structures of plasmepsin II from Plasmodium falciparum in complex with two hydroxyethylamine-based inhibitors.</title>
        <authorList>
            <person name="Recacha R."/>
            <person name="Leitans J."/>
            <person name="Akopjana I."/>
            <person name="Aprupe L."/>
            <person name="Trapencieris P."/>
            <person name="Jaudzems K."/>
            <person name="Jirgensons A."/>
            <person name="Tars K."/>
        </authorList>
    </citation>
    <scope>X-RAY CRYSTALLOGRAPHY (2.27 ANGSTROMS) OF 125-453 OF WILD TYPE AND OF MUTANT SER-330 IN COMPLEX WITH INHIBITOR</scope>
    <scope>DISULFIDE BONDS</scope>
</reference>
<reference evidence="56" key="23">
    <citation type="journal article" date="2016" name="Acta Crystallogr. F">
        <title>Crystal structure of Plasmodium falciparum proplasmepsin IV: the plasticity of proplasmepsins.</title>
        <authorList>
            <person name="Recacha R."/>
            <person name="Jaudzems K."/>
            <person name="Akopjana I."/>
            <person name="Jirgensons A."/>
            <person name="Tars K."/>
        </authorList>
    </citation>
    <scope>X-RAY CRYSTALLOGRAPHY (2.64 ANGSTROMS) OF 78-453</scope>
    <scope>DISULFIDE BONDS</scope>
</reference>
<reference evidence="55" key="24">
    <citation type="journal article" date="2016" name="J. Med. Chem.">
        <title>Fragment-Based Discovery of 2-Aminoquinazolin-4(3H)-ones As Novel Class Nonpeptidomimetic Inhibitors of the Plasmepsins I, II, and IV.</title>
        <authorList>
            <person name="Rasina D."/>
            <person name="Otikovs M."/>
            <person name="Leitans J."/>
            <person name="Recacha R."/>
            <person name="Borysov O.V."/>
            <person name="Kanepe-Lapsa I."/>
            <person name="Domraceva I."/>
            <person name="Pantelejevs T."/>
            <person name="Tars K."/>
            <person name="Blackman M.J."/>
            <person name="Jaudzems K."/>
            <person name="Jirgensons A."/>
        </authorList>
    </citation>
    <scope>X-RAY CRYSTALLOGRAPHY (2.62 ANGSTROMS) OF 125-453 IN COMPLEX WITH INHIBITOR</scope>
    <scope>CATALYTIC ACTIVITY</scope>
    <scope>DISULFIDE BONDS</scope>
</reference>
<protein>
    <recommendedName>
        <fullName evidence="31">Plasmepsin II</fullName>
        <shortName evidence="30">PLM II</shortName>
        <ecNumber evidence="6 10 14 15 17 19 20">3.4.23.39</ecNumber>
    </recommendedName>
    <alternativeName>
        <fullName evidence="29">Aspartic hemoglobinase II</fullName>
    </alternativeName>
    <alternativeName>
        <fullName evidence="29">PfAPD</fullName>
    </alternativeName>
    <alternativeName>
        <fullName evidence="28">PfPM1</fullName>
    </alternativeName>
    <alternativeName>
        <fullName evidence="32">Plasmepsin 2</fullName>
    </alternativeName>
</protein>
<feature type="propeptide" id="PRO_0000025930" evidence="9">
    <location>
        <begin position="1"/>
        <end position="124"/>
    </location>
</feature>
<feature type="chain" id="PRO_0000025931" description="Plasmepsin II">
    <location>
        <begin position="125"/>
        <end position="453"/>
    </location>
</feature>
<feature type="topological domain" description="Cytoplasmic" evidence="32">
    <location>
        <begin position="1"/>
        <end position="37"/>
    </location>
</feature>
<feature type="transmembrane region" description="Helical; Signal-anchor for type II membrane protein" evidence="3">
    <location>
        <begin position="38"/>
        <end position="58"/>
    </location>
</feature>
<feature type="topological domain" description="Lumenal" evidence="32">
    <location>
        <begin position="59"/>
        <end position="453"/>
    </location>
</feature>
<feature type="domain" description="Peptidase A1" evidence="4">
    <location>
        <begin position="140"/>
        <end position="447"/>
    </location>
</feature>
<feature type="active site" evidence="5">
    <location>
        <position position="158"/>
    </location>
</feature>
<feature type="active site" evidence="5">
    <location>
        <position position="338"/>
    </location>
</feature>
<feature type="disulfide bond" evidence="7 8 11 12 13 14 15 16 17 18 19 22 23 24 25 26 27 34 35 36 37 38 39 40 41 42 43 44 45 46 47 48 49 51 52 53 54 55 56">
    <location>
        <begin position="171"/>
        <end position="176"/>
    </location>
</feature>
<feature type="disulfide bond" evidence="7 8 11 12 13 14 15 16 17 18 19 22 23 24 25 26 27 34 35 36 37 38 39 40 41 42 43 44 45 46 47 48 49 51 52 53 54 55 56">
    <location>
        <begin position="373"/>
        <end position="409"/>
    </location>
</feature>
<feature type="mutagenesis site" description="Reduces catalytic activity towards host hemoglobin." evidence="10">
    <location>
        <position position="241"/>
    </location>
</feature>
<feature type="mutagenesis site" description="No effect on catalytic activity." evidence="10">
    <original>F</original>
    <variation>A</variation>
    <variation>K</variation>
    <location>
        <position position="244"/>
    </location>
</feature>
<feature type="mutagenesis site" description="Reduces catalytic activity towards host hemoglobin." evidence="10">
    <original>F</original>
    <variation>E</variation>
    <location>
        <position position="244"/>
    </location>
</feature>
<feature type="strand" evidence="58">
    <location>
        <begin position="80"/>
        <end position="87"/>
    </location>
</feature>
<feature type="helix" evidence="58">
    <location>
        <begin position="89"/>
        <end position="99"/>
    </location>
</feature>
<feature type="helix" evidence="58">
    <location>
        <begin position="103"/>
        <end position="113"/>
    </location>
</feature>
<feature type="turn" evidence="58">
    <location>
        <begin position="114"/>
        <end position="116"/>
    </location>
</feature>
<feature type="strand" evidence="58">
    <location>
        <begin position="118"/>
        <end position="120"/>
    </location>
</feature>
<feature type="strand" evidence="60">
    <location>
        <begin position="127"/>
        <end position="135"/>
    </location>
</feature>
<feature type="turn" evidence="60">
    <location>
        <begin position="136"/>
        <end position="138"/>
    </location>
</feature>
<feature type="strand" evidence="60">
    <location>
        <begin position="139"/>
        <end position="146"/>
    </location>
</feature>
<feature type="turn" evidence="60">
    <location>
        <begin position="147"/>
        <end position="150"/>
    </location>
</feature>
<feature type="strand" evidence="60">
    <location>
        <begin position="151"/>
        <end position="158"/>
    </location>
</feature>
<feature type="strand" evidence="60">
    <location>
        <begin position="164"/>
        <end position="168"/>
    </location>
</feature>
<feature type="helix" evidence="60">
    <location>
        <begin position="176"/>
        <end position="178"/>
    </location>
</feature>
<feature type="helix" evidence="60">
    <location>
        <begin position="184"/>
        <end position="186"/>
    </location>
</feature>
<feature type="strand" evidence="60">
    <location>
        <begin position="191"/>
        <end position="200"/>
    </location>
</feature>
<feature type="strand" evidence="60">
    <location>
        <begin position="202"/>
        <end position="217"/>
    </location>
</feature>
<feature type="strand" evidence="60">
    <location>
        <begin position="220"/>
        <end position="231"/>
    </location>
</feature>
<feature type="helix" evidence="60">
    <location>
        <begin position="233"/>
        <end position="235"/>
    </location>
</feature>
<feature type="helix" evidence="60">
    <location>
        <begin position="238"/>
        <end position="241"/>
    </location>
</feature>
<feature type="strand" evidence="60">
    <location>
        <begin position="246"/>
        <end position="249"/>
    </location>
</feature>
<feature type="helix" evidence="60">
    <location>
        <begin position="253"/>
        <end position="255"/>
    </location>
</feature>
<feature type="strand" evidence="59">
    <location>
        <begin position="256"/>
        <end position="258"/>
    </location>
</feature>
<feature type="helix" evidence="60">
    <location>
        <begin position="263"/>
        <end position="269"/>
    </location>
</feature>
<feature type="strand" evidence="60">
    <location>
        <begin position="272"/>
        <end position="275"/>
    </location>
</feature>
<feature type="strand" evidence="60">
    <location>
        <begin position="277"/>
        <end position="281"/>
    </location>
</feature>
<feature type="turn" evidence="60">
    <location>
        <begin position="285"/>
        <end position="287"/>
    </location>
</feature>
<feature type="strand" evidence="60">
    <location>
        <begin position="290"/>
        <end position="296"/>
    </location>
</feature>
<feature type="helix" evidence="60">
    <location>
        <begin position="299"/>
        <end position="301"/>
    </location>
</feature>
<feature type="strand" evidence="60">
    <location>
        <begin position="302"/>
        <end position="313"/>
    </location>
</feature>
<feature type="turn" evidence="60">
    <location>
        <begin position="314"/>
        <end position="317"/>
    </location>
</feature>
<feature type="strand" evidence="60">
    <location>
        <begin position="318"/>
        <end position="325"/>
    </location>
</feature>
<feature type="strand" evidence="60">
    <location>
        <begin position="328"/>
        <end position="337"/>
    </location>
</feature>
<feature type="strand" evidence="60">
    <location>
        <begin position="343"/>
        <end position="346"/>
    </location>
</feature>
<feature type="helix" evidence="60">
    <location>
        <begin position="348"/>
        <end position="354"/>
    </location>
</feature>
<feature type="turn" evidence="60">
    <location>
        <begin position="355"/>
        <end position="357"/>
    </location>
</feature>
<feature type="strand" evidence="57">
    <location>
        <begin position="358"/>
        <end position="362"/>
    </location>
</feature>
<feature type="strand" evidence="57">
    <location>
        <begin position="364"/>
        <end position="366"/>
    </location>
</feature>
<feature type="strand" evidence="60">
    <location>
        <begin position="369"/>
        <end position="372"/>
    </location>
</feature>
<feature type="strand" evidence="60">
    <location>
        <begin position="381"/>
        <end position="384"/>
    </location>
</feature>
<feature type="strand" evidence="60">
    <location>
        <begin position="389"/>
        <end position="392"/>
    </location>
</feature>
<feature type="helix" evidence="60">
    <location>
        <begin position="394"/>
        <end position="397"/>
    </location>
</feature>
<feature type="strand" evidence="60">
    <location>
        <begin position="398"/>
        <end position="400"/>
    </location>
</feature>
<feature type="turn" evidence="60">
    <location>
        <begin position="402"/>
        <end position="404"/>
    </location>
</feature>
<feature type="strand" evidence="60">
    <location>
        <begin position="408"/>
        <end position="411"/>
    </location>
</feature>
<feature type="strand" evidence="60">
    <location>
        <begin position="413"/>
        <end position="415"/>
    </location>
</feature>
<feature type="strand" evidence="60">
    <location>
        <begin position="422"/>
        <end position="425"/>
    </location>
</feature>
<feature type="helix" evidence="60">
    <location>
        <begin position="427"/>
        <end position="432"/>
    </location>
</feature>
<feature type="strand" evidence="60">
    <location>
        <begin position="433"/>
        <end position="438"/>
    </location>
</feature>
<feature type="turn" evidence="60">
    <location>
        <begin position="439"/>
        <end position="442"/>
    </location>
</feature>
<feature type="strand" evidence="60">
    <location>
        <begin position="443"/>
        <end position="449"/>
    </location>
</feature>
<evidence type="ECO:0000250" key="1">
    <source>
        <dbReference type="UniProtKB" id="P39898"/>
    </source>
</evidence>
<evidence type="ECO:0000250" key="2">
    <source>
        <dbReference type="UniProtKB" id="Q8I6V3"/>
    </source>
</evidence>
<evidence type="ECO:0000255" key="3"/>
<evidence type="ECO:0000255" key="4">
    <source>
        <dbReference type="PROSITE-ProRule" id="PRU01103"/>
    </source>
</evidence>
<evidence type="ECO:0000255" key="5">
    <source>
        <dbReference type="PROSITE-ProRule" id="PRU10094"/>
    </source>
</evidence>
<evidence type="ECO:0000269" key="6">
    <source>
    </source>
</evidence>
<evidence type="ECO:0000269" key="7">
    <source>
    </source>
</evidence>
<evidence type="ECO:0000269" key="8">
    <source>
    </source>
</evidence>
<evidence type="ECO:0000269" key="9">
    <source>
    </source>
</evidence>
<evidence type="ECO:0000269" key="10">
    <source>
    </source>
</evidence>
<evidence type="ECO:0000269" key="11">
    <source>
    </source>
</evidence>
<evidence type="ECO:0000269" key="12">
    <source>
    </source>
</evidence>
<evidence type="ECO:0000269" key="13">
    <source>
    </source>
</evidence>
<evidence type="ECO:0000269" key="14">
    <source>
    </source>
</evidence>
<evidence type="ECO:0000269" key="15">
    <source>
    </source>
</evidence>
<evidence type="ECO:0000269" key="16">
    <source>
    </source>
</evidence>
<evidence type="ECO:0000269" key="17">
    <source>
    </source>
</evidence>
<evidence type="ECO:0000269" key="18">
    <source>
    </source>
</evidence>
<evidence type="ECO:0000269" key="19">
    <source>
    </source>
</evidence>
<evidence type="ECO:0000269" key="20">
    <source>
    </source>
</evidence>
<evidence type="ECO:0000269" key="21">
    <source>
    </source>
</evidence>
<evidence type="ECO:0000269" key="22">
    <source>
    </source>
</evidence>
<evidence type="ECO:0000269" key="23">
    <source ref="11"/>
</evidence>
<evidence type="ECO:0000269" key="24">
    <source ref="12"/>
</evidence>
<evidence type="ECO:0000269" key="25">
    <source ref="14"/>
</evidence>
<evidence type="ECO:0000269" key="26">
    <source ref="15"/>
</evidence>
<evidence type="ECO:0000269" key="27">
    <source ref="16"/>
</evidence>
<evidence type="ECO:0000303" key="28">
    <source>
    </source>
</evidence>
<evidence type="ECO:0000303" key="29">
    <source>
    </source>
</evidence>
<evidence type="ECO:0000303" key="30">
    <source>
    </source>
</evidence>
<evidence type="ECO:0000303" key="31">
    <source>
    </source>
</evidence>
<evidence type="ECO:0000305" key="32"/>
<evidence type="ECO:0000312" key="33">
    <source>
        <dbReference type="Proteomes" id="UP000054289"/>
    </source>
</evidence>
<evidence type="ECO:0007744" key="34">
    <source>
        <dbReference type="PDB" id="1LEE"/>
    </source>
</evidence>
<evidence type="ECO:0007744" key="35">
    <source>
        <dbReference type="PDB" id="1LF2"/>
    </source>
</evidence>
<evidence type="ECO:0007744" key="36">
    <source>
        <dbReference type="PDB" id="1LF3"/>
    </source>
</evidence>
<evidence type="ECO:0007744" key="37">
    <source>
        <dbReference type="PDB" id="1LF4"/>
    </source>
</evidence>
<evidence type="ECO:0007744" key="38">
    <source>
        <dbReference type="PDB" id="1M43"/>
    </source>
</evidence>
<evidence type="ECO:0007744" key="39">
    <source>
        <dbReference type="PDB" id="1ME6"/>
    </source>
</evidence>
<evidence type="ECO:0007744" key="40">
    <source>
        <dbReference type="PDB" id="1PFZ"/>
    </source>
</evidence>
<evidence type="ECO:0007744" key="41">
    <source>
        <dbReference type="PDB" id="1SME"/>
    </source>
</evidence>
<evidence type="ECO:0007744" key="42">
    <source>
        <dbReference type="PDB" id="1W6H"/>
    </source>
</evidence>
<evidence type="ECO:0007744" key="43">
    <source>
        <dbReference type="PDB" id="1W6I"/>
    </source>
</evidence>
<evidence type="ECO:0007744" key="44">
    <source>
        <dbReference type="PDB" id="1XDH"/>
    </source>
</evidence>
<evidence type="ECO:0007744" key="45">
    <source>
        <dbReference type="PDB" id="1XE5"/>
    </source>
</evidence>
<evidence type="ECO:0007744" key="46">
    <source>
        <dbReference type="PDB" id="1XE6"/>
    </source>
</evidence>
<evidence type="ECO:0007744" key="47">
    <source>
        <dbReference type="PDB" id="2BJU"/>
    </source>
</evidence>
<evidence type="ECO:0007744" key="48">
    <source>
        <dbReference type="PDB" id="2IGX"/>
    </source>
</evidence>
<evidence type="ECO:0007744" key="49">
    <source>
        <dbReference type="PDB" id="2IGY"/>
    </source>
</evidence>
<evidence type="ECO:0007744" key="50">
    <source>
        <dbReference type="PDB" id="2R9B"/>
    </source>
</evidence>
<evidence type="ECO:0007744" key="51">
    <source>
        <dbReference type="PDB" id="3F9Q"/>
    </source>
</evidence>
<evidence type="ECO:0007744" key="52">
    <source>
        <dbReference type="PDB" id="4CKU"/>
    </source>
</evidence>
<evidence type="ECO:0007744" key="53">
    <source>
        <dbReference type="PDB" id="4Y6M"/>
    </source>
</evidence>
<evidence type="ECO:0007744" key="54">
    <source>
        <dbReference type="PDB" id="4YA8"/>
    </source>
</evidence>
<evidence type="ECO:0007744" key="55">
    <source>
        <dbReference type="PDB" id="4Z22"/>
    </source>
</evidence>
<evidence type="ECO:0007744" key="56">
    <source>
        <dbReference type="PDB" id="5BWY"/>
    </source>
</evidence>
<evidence type="ECO:0007829" key="57">
    <source>
        <dbReference type="PDB" id="1LF2"/>
    </source>
</evidence>
<evidence type="ECO:0007829" key="58">
    <source>
        <dbReference type="PDB" id="1PFZ"/>
    </source>
</evidence>
<evidence type="ECO:0007829" key="59">
    <source>
        <dbReference type="PDB" id="1XDH"/>
    </source>
</evidence>
<evidence type="ECO:0007829" key="60">
    <source>
        <dbReference type="PDB" id="2BJU"/>
    </source>
</evidence>
<organism evidence="33">
    <name type="scientific">Plasmodium falciparum (isolate HB3)</name>
    <dbReference type="NCBI Taxonomy" id="137071"/>
    <lineage>
        <taxon>Eukaryota</taxon>
        <taxon>Sar</taxon>
        <taxon>Alveolata</taxon>
        <taxon>Apicomplexa</taxon>
        <taxon>Aconoidasida</taxon>
        <taxon>Haemosporida</taxon>
        <taxon>Plasmodiidae</taxon>
        <taxon>Plasmodium</taxon>
        <taxon>Plasmodium (Laverania)</taxon>
    </lineage>
</organism>
<comment type="function">
    <text evidence="6 10 20 32">During the asexual blood stage, participates in initial cleavage of native host hemoglobin (Hb) resulting in Hb denaturation (PubMed:11782538, PubMed:15574427, PubMed:8844673). May cleave preferentially denatured hemoglobin that has been cleaved by PMI (PubMed:8844673). Digestion of host Hb is an essential step which provides the parasite with amino acids for protein synthesis, and regulates osmolarity (Probable).</text>
</comment>
<comment type="catalytic activity">
    <reaction evidence="6 10 14 15 17 19 20">
        <text>Hydrolysis of the bonds linking certain hydrophobic residues in hemoglobin or globin. Also cleaves small molecules substrates such as Ala-Leu-Glu-Arg-Thr-Phe-|-Phe(NO2)-Ser-Phe-Pro-Thr.</text>
        <dbReference type="EC" id="3.4.23.39"/>
    </reaction>
</comment>
<comment type="activity regulation">
    <text evidence="20">Inhibited by pepstatin A.</text>
</comment>
<comment type="subunit">
    <text evidence="2">Component of the hemozoin formation complex (HFC) composed of falcipains FP2A and/or FP2B, plasmepsins PMII, PMIII/HAP and PMIV, heme detoxifying protein HDP and falcilysin FLN. The HFC complex is involved in hemoglobin degradation and detoxification of heme in the food vacuole during the asexual blood stage.</text>
</comment>
<comment type="subcellular location">
    <subcellularLocation>
        <location evidence="21">Membrane</location>
        <topology evidence="1">Single-pass type II membrane protein</topology>
    </subcellularLocation>
    <subcellularLocation>
        <location evidence="6 21">Vacuole lumen</location>
    </subcellularLocation>
    <subcellularLocation>
        <location evidence="21">Vacuole membrane</location>
    </subcellularLocation>
    <text evidence="6 21">At the beginning of the asexual blood stage, the transmembrane zymogen is transported to the cytostome, an endocytic structure spanning the parasite cell membrane and the parasitophorous vacuole membrane where host proteins such as hemoglobin are endocytosed (PubMed:9169469). Following endocytosis, localizes to the cytostome vacuole membrane to be then delivered to the digestive (or food) vacuole where it is cleaved into the soluble and active enzyme (PubMed:9169469). In trophozoites, localizes to the digestive vacuole, an acidic vacuole where host hemoglobin is digested (PubMed:11782538, PubMed:9169469).</text>
</comment>
<comment type="developmental stage">
    <text evidence="6 9 21">Expressed during the asexual blood stage; expression begins in late rings, increases in trophozoites and continues in schizonts (at protein level).</text>
</comment>
<comment type="PTM">
    <text evidence="21">Not N-glycosylated.</text>
</comment>
<comment type="PTM">
    <text evidence="2 21">Proteolytically cleaved into the soluble active mature form in the digestive vacuole by cysteine protease falcipains; the process begins at the early ring stage (PubMed:9169469). Proteolysis requires an acidic environment (By similarity). In absence of falcipains, autoprocessing may serve as an alternate activation system (By similarity).</text>
</comment>
<comment type="similarity">
    <text evidence="32">Belongs to the peptidase A1 family.</text>
</comment>
<accession>P46925</accession>
<accession>A0A0L7K5Z5</accession>
<name>PLM2_PLAFX</name>